<reference key="1">
    <citation type="submission" date="1995-12" db="EMBL/GenBank/DDBJ databases">
        <authorList>
            <person name="Dunn J.J."/>
            <person name="Butler-Loffredo L."/>
            <person name="Kieleczawa J."/>
            <person name="Medalle J."/>
            <person name="Luft B.J."/>
        </authorList>
    </citation>
    <scope>NUCLEOTIDE SEQUENCE [GENOMIC DNA]</scope>
    <source>
        <strain>ATCC 35210 / DSM 4680 / CIP 102532 / B31</strain>
    </source>
</reference>
<reference key="2">
    <citation type="journal article" date="1996" name="Gene">
        <title>FliH and fliI of Borrelia burgdorferi are similar to flagellar and virulence factor export proteins of other bacteria.</title>
        <authorList>
            <person name="Ge Y."/>
            <person name="Old I.G."/>
            <person name="Saint-Girons I."/>
            <person name="Yelton D.B."/>
            <person name="Charon N.W."/>
        </authorList>
    </citation>
    <scope>NUCLEOTIDE SEQUENCE [GENOMIC DNA]</scope>
    <source>
        <strain>212</strain>
    </source>
</reference>
<reference key="3">
    <citation type="submission" date="1996-02" db="EMBL/GenBank/DDBJ databases">
        <authorList>
            <person name="Ge Y."/>
            <person name="Saint-Girons I."/>
            <person name="Old I.G."/>
            <person name="Charon N.W."/>
        </authorList>
    </citation>
    <scope>NUCLEOTIDE SEQUENCE [GENOMIC DNA]</scope>
    <source>
        <strain>212</strain>
    </source>
</reference>
<reference key="4">
    <citation type="journal article" date="1997" name="Nature">
        <title>Genomic sequence of a Lyme disease spirochaete, Borrelia burgdorferi.</title>
        <authorList>
            <person name="Fraser C.M."/>
            <person name="Casjens S."/>
            <person name="Huang W.M."/>
            <person name="Sutton G.G."/>
            <person name="Clayton R.A."/>
            <person name="Lathigra R."/>
            <person name="White O."/>
            <person name="Ketchum K.A."/>
            <person name="Dodson R.J."/>
            <person name="Hickey E.K."/>
            <person name="Gwinn M.L."/>
            <person name="Dougherty B.A."/>
            <person name="Tomb J.-F."/>
            <person name="Fleischmann R.D."/>
            <person name="Richardson D.L."/>
            <person name="Peterson J.D."/>
            <person name="Kerlavage A.R."/>
            <person name="Quackenbush J."/>
            <person name="Salzberg S.L."/>
            <person name="Hanson M."/>
            <person name="van Vugt R."/>
            <person name="Palmer N."/>
            <person name="Adams M.D."/>
            <person name="Gocayne J.D."/>
            <person name="Weidman J.F."/>
            <person name="Utterback T.R."/>
            <person name="Watthey L."/>
            <person name="McDonald L.A."/>
            <person name="Artiach P."/>
            <person name="Bowman C."/>
            <person name="Garland S.A."/>
            <person name="Fujii C."/>
            <person name="Cotton M.D."/>
            <person name="Horst K."/>
            <person name="Roberts K.M."/>
            <person name="Hatch B."/>
            <person name="Smith H.O."/>
            <person name="Venter J.C."/>
        </authorList>
    </citation>
    <scope>NUCLEOTIDE SEQUENCE [LARGE SCALE GENOMIC DNA]</scope>
    <source>
        <strain>ATCC 35210 / DSM 4680 / CIP 102532 / B31</strain>
    </source>
</reference>
<name>FLII_BORBU</name>
<dbReference type="EC" id="7.1.2.2"/>
<dbReference type="EMBL" id="U43739">
    <property type="protein sequence ID" value="AAA85611.1"/>
    <property type="molecule type" value="Genomic_DNA"/>
</dbReference>
<dbReference type="EMBL" id="L43325">
    <property type="protein sequence ID" value="AAB04681.1"/>
    <property type="molecule type" value="Genomic_DNA"/>
</dbReference>
<dbReference type="EMBL" id="L76303">
    <property type="protein sequence ID" value="AAB51413.1"/>
    <property type="molecule type" value="Genomic_DNA"/>
</dbReference>
<dbReference type="EMBL" id="AE000783">
    <property type="protein sequence ID" value="AAC66660.1"/>
    <property type="molecule type" value="Genomic_DNA"/>
</dbReference>
<dbReference type="PIR" id="H70135">
    <property type="entry name" value="H70135"/>
</dbReference>
<dbReference type="RefSeq" id="NP_212422.1">
    <property type="nucleotide sequence ID" value="NC_001318.1"/>
</dbReference>
<dbReference type="RefSeq" id="WP_002660657.1">
    <property type="nucleotide sequence ID" value="NC_001318.1"/>
</dbReference>
<dbReference type="SMR" id="P52607"/>
<dbReference type="STRING" id="224326.BB_0288"/>
<dbReference type="PaxDb" id="224326-BB_0288"/>
<dbReference type="EnsemblBacteria" id="AAC66660">
    <property type="protein sequence ID" value="AAC66660"/>
    <property type="gene ID" value="BB_0288"/>
</dbReference>
<dbReference type="KEGG" id="bbu:BB_0288"/>
<dbReference type="PATRIC" id="fig|224326.49.peg.687"/>
<dbReference type="HOGENOM" id="CLU_022398_5_1_12"/>
<dbReference type="OrthoDB" id="9802718at2"/>
<dbReference type="Proteomes" id="UP000001807">
    <property type="component" value="Chromosome"/>
</dbReference>
<dbReference type="GO" id="GO:0009288">
    <property type="term" value="C:bacterial-type flagellum"/>
    <property type="evidence" value="ECO:0007669"/>
    <property type="project" value="InterPro"/>
</dbReference>
<dbReference type="GO" id="GO:0005737">
    <property type="term" value="C:cytoplasm"/>
    <property type="evidence" value="ECO:0007669"/>
    <property type="project" value="UniProtKB-SubCell"/>
</dbReference>
<dbReference type="GO" id="GO:0030257">
    <property type="term" value="C:type III protein secretion system complex"/>
    <property type="evidence" value="ECO:0007669"/>
    <property type="project" value="InterPro"/>
</dbReference>
<dbReference type="GO" id="GO:0005524">
    <property type="term" value="F:ATP binding"/>
    <property type="evidence" value="ECO:0007669"/>
    <property type="project" value="UniProtKB-KW"/>
</dbReference>
<dbReference type="GO" id="GO:0016887">
    <property type="term" value="F:ATP hydrolysis activity"/>
    <property type="evidence" value="ECO:0007669"/>
    <property type="project" value="InterPro"/>
</dbReference>
<dbReference type="GO" id="GO:0046933">
    <property type="term" value="F:proton-transporting ATP synthase activity, rotational mechanism"/>
    <property type="evidence" value="ECO:0007669"/>
    <property type="project" value="TreeGrafter"/>
</dbReference>
<dbReference type="GO" id="GO:0044781">
    <property type="term" value="P:bacterial-type flagellum organization"/>
    <property type="evidence" value="ECO:0007669"/>
    <property type="project" value="UniProtKB-KW"/>
</dbReference>
<dbReference type="GO" id="GO:0030254">
    <property type="term" value="P:protein secretion by the type III secretion system"/>
    <property type="evidence" value="ECO:0007669"/>
    <property type="project" value="InterPro"/>
</dbReference>
<dbReference type="CDD" id="cd18117">
    <property type="entry name" value="ATP-synt_flagellum-secretory_path_III_N"/>
    <property type="match status" value="1"/>
</dbReference>
<dbReference type="CDD" id="cd01136">
    <property type="entry name" value="ATPase_flagellum-secretory_path_III"/>
    <property type="match status" value="1"/>
</dbReference>
<dbReference type="FunFam" id="3.40.50.12240:FF:000002">
    <property type="entry name" value="Flagellum-specific ATP synthase FliI"/>
    <property type="match status" value="1"/>
</dbReference>
<dbReference type="Gene3D" id="3.40.50.12240">
    <property type="match status" value="1"/>
</dbReference>
<dbReference type="InterPro" id="IPR003593">
    <property type="entry name" value="AAA+_ATPase"/>
</dbReference>
<dbReference type="InterPro" id="IPR050053">
    <property type="entry name" value="ATPase_alpha/beta_chains"/>
</dbReference>
<dbReference type="InterPro" id="IPR004100">
    <property type="entry name" value="ATPase_F1/V1/A1_a/bsu_N"/>
</dbReference>
<dbReference type="InterPro" id="IPR000194">
    <property type="entry name" value="ATPase_F1/V1/A1_a/bsu_nucl-bd"/>
</dbReference>
<dbReference type="InterPro" id="IPR005714">
    <property type="entry name" value="ATPase_T3SS_FliI/YscN"/>
</dbReference>
<dbReference type="InterPro" id="IPR022426">
    <property type="entry name" value="FliI_clade3"/>
</dbReference>
<dbReference type="InterPro" id="IPR027417">
    <property type="entry name" value="P-loop_NTPase"/>
</dbReference>
<dbReference type="InterPro" id="IPR040627">
    <property type="entry name" value="T3SS_ATPase_C"/>
</dbReference>
<dbReference type="NCBIfam" id="TIGR03498">
    <property type="entry name" value="FliI_clade3"/>
    <property type="match status" value="1"/>
</dbReference>
<dbReference type="NCBIfam" id="TIGR01026">
    <property type="entry name" value="fliI_yscN"/>
    <property type="match status" value="1"/>
</dbReference>
<dbReference type="PANTHER" id="PTHR15184">
    <property type="entry name" value="ATP SYNTHASE"/>
    <property type="match status" value="1"/>
</dbReference>
<dbReference type="PANTHER" id="PTHR15184:SF9">
    <property type="entry name" value="SPI-1 TYPE 3 SECRETION SYSTEM ATPASE"/>
    <property type="match status" value="1"/>
</dbReference>
<dbReference type="Pfam" id="PF00006">
    <property type="entry name" value="ATP-synt_ab"/>
    <property type="match status" value="1"/>
</dbReference>
<dbReference type="Pfam" id="PF02874">
    <property type="entry name" value="ATP-synt_ab_N"/>
    <property type="match status" value="1"/>
</dbReference>
<dbReference type="Pfam" id="PF18269">
    <property type="entry name" value="T3SS_ATPase_C"/>
    <property type="match status" value="1"/>
</dbReference>
<dbReference type="SMART" id="SM00382">
    <property type="entry name" value="AAA"/>
    <property type="match status" value="1"/>
</dbReference>
<dbReference type="SUPFAM" id="SSF52540">
    <property type="entry name" value="P-loop containing nucleoside triphosphate hydrolases"/>
    <property type="match status" value="1"/>
</dbReference>
<gene>
    <name type="primary">fliI</name>
    <name type="ordered locus">BB_0288</name>
</gene>
<keyword id="KW-0066">ATP synthesis</keyword>
<keyword id="KW-0067">ATP-binding</keyword>
<keyword id="KW-1005">Bacterial flagellum biogenesis</keyword>
<keyword id="KW-1006">Bacterial flagellum protein export</keyword>
<keyword id="KW-0963">Cytoplasm</keyword>
<keyword id="KW-0375">Hydrogen ion transport</keyword>
<keyword id="KW-0406">Ion transport</keyword>
<keyword id="KW-0547">Nucleotide-binding</keyword>
<keyword id="KW-0653">Protein transport</keyword>
<keyword id="KW-1185">Reference proteome</keyword>
<keyword id="KW-1278">Translocase</keyword>
<keyword id="KW-0813">Transport</keyword>
<evidence type="ECO:0000250" key="1"/>
<evidence type="ECO:0000305" key="2"/>
<protein>
    <recommendedName>
        <fullName>Flagellum-specific ATP synthase</fullName>
        <ecNumber>7.1.2.2</ecNumber>
    </recommendedName>
</protein>
<accession>P52607</accession>
<accession>Q44913</accession>
<accession>Q44916</accession>
<comment type="function">
    <text>Probable catalytic subunit of a protein translocase for flagellum-specific export, or a proton translocase involved in local circuits at the flagellum. May be involved in a specialized protein export pathway that proceeds without signal peptide cleavage.</text>
</comment>
<comment type="catalytic activity">
    <reaction>
        <text>ATP + H2O + 4 H(+)(in) = ADP + phosphate + 5 H(+)(out)</text>
        <dbReference type="Rhea" id="RHEA:57720"/>
        <dbReference type="ChEBI" id="CHEBI:15377"/>
        <dbReference type="ChEBI" id="CHEBI:15378"/>
        <dbReference type="ChEBI" id="CHEBI:30616"/>
        <dbReference type="ChEBI" id="CHEBI:43474"/>
        <dbReference type="ChEBI" id="CHEBI:456216"/>
        <dbReference type="EC" id="7.1.2.2"/>
    </reaction>
</comment>
<comment type="subcellular location">
    <subcellularLocation>
        <location evidence="2">Cytoplasm</location>
    </subcellularLocation>
</comment>
<comment type="similarity">
    <text evidence="2">Belongs to the ATPase alpha/beta chains family.</text>
</comment>
<feature type="chain" id="PRO_0000144689" description="Flagellum-specific ATP synthase">
    <location>
        <begin position="1"/>
        <end position="436"/>
    </location>
</feature>
<feature type="binding site" evidence="1">
    <location>
        <begin position="165"/>
        <end position="172"/>
    </location>
    <ligand>
        <name>ATP</name>
        <dbReference type="ChEBI" id="CHEBI:30616"/>
    </ligand>
</feature>
<feature type="sequence conflict" description="In Ref. 2; AAB04681 and 3; AAB51413." evidence="2" ref="2 3">
    <original>S</original>
    <variation>N</variation>
    <location>
        <position position="76"/>
    </location>
</feature>
<feature type="sequence conflict" description="In Ref. 2; AAB04681." evidence="2" ref="2">
    <original>L</original>
    <variation>F</variation>
    <location>
        <position position="118"/>
    </location>
</feature>
<feature type="sequence conflict" description="In Ref. 2; AAB04681." evidence="2" ref="2">
    <original>E</original>
    <variation>Q</variation>
    <location>
        <position position="128"/>
    </location>
</feature>
<feature type="sequence conflict" description="In Ref. 2; AAB04681." evidence="2" ref="2">
    <original>GQRVGIFSGS</original>
    <variation>RTKELVFFWF</variation>
    <location>
        <begin position="158"/>
        <end position="167"/>
    </location>
</feature>
<feature type="sequence conflict" description="In Ref. 2; AAB04681." evidence="2" ref="2">
    <original>KSTL</original>
    <variation>NSYLC</variation>
    <location>
        <begin position="171"/>
        <end position="174"/>
    </location>
</feature>
<feature type="sequence conflict" description="In Ref. 2; AAB04681." evidence="2" ref="2">
    <location>
        <position position="251"/>
    </location>
</feature>
<feature type="sequence conflict" description="In Ref. 2; AAB04681 and 3; AAB51413." evidence="2" ref="2 3">
    <original>LL</original>
    <variation>FC</variation>
    <location>
        <begin position="252"/>
        <end position="253"/>
    </location>
</feature>
<feature type="sequence conflict" description="In Ref. 2; AAB04681." evidence="2" ref="2">
    <original>R</original>
    <variation>W</variation>
    <location>
        <position position="259"/>
    </location>
</feature>
<feature type="sequence conflict" description="In Ref. 2; AAB04681." evidence="2" ref="2">
    <original>REMSLSLGEP</original>
    <variation>KRDVSFFRGA</variation>
    <location>
        <begin position="265"/>
        <end position="274"/>
    </location>
</feature>
<feature type="sequence conflict" description="In Ref. 2; AAB04681." evidence="2" ref="2">
    <original>A</original>
    <variation>D</variation>
    <location>
        <position position="322"/>
    </location>
</feature>
<proteinExistence type="inferred from homology"/>
<organism>
    <name type="scientific">Borreliella burgdorferi (strain ATCC 35210 / DSM 4680 / CIP 102532 / B31)</name>
    <name type="common">Borrelia burgdorferi</name>
    <dbReference type="NCBI Taxonomy" id="224326"/>
    <lineage>
        <taxon>Bacteria</taxon>
        <taxon>Pseudomonadati</taxon>
        <taxon>Spirochaetota</taxon>
        <taxon>Spirochaetia</taxon>
        <taxon>Spirochaetales</taxon>
        <taxon>Borreliaceae</taxon>
        <taxon>Borreliella</taxon>
    </lineage>
</organism>
<sequence>MSNFFENYLRQVDDIETVSFVGRVQKIKGLLVESLGPQCAIGDLCLIDQRNGKKVCAEVLGFNGPYVSLMAYEGFSGIEVGNKVYSLNKGLEINLSDELLGRVIDSLGRPIDNKGSFLNNSYKELIFEKINPINRSIFEDQILTGVKVLDGFLPVAKGQRVGIFSGSGVGKSTLLGMIAKNSNADVNVIAFIGERGRELNEFIEHELGEERLKKSVLVVSTSDESPISRYKGAYVATMIAEYFREQGKDVALLFDSITRFANAKREMSLSLGEPPVAKGYPPSVFVEIPILLERSGFNGNGGSVTGFYTVLVEGDDFTEPVADNIKAVLDGHIILDRDLFDRGIYPSINVLSSTSRSIHRIMSLEKQKLIMKARNLLSIYKDYEDLIRTGIYLKGSNKDVDFAISKYPKIINFISQGINETFDFENLEDEIKEILS</sequence>